<proteinExistence type="evidence at transcript level"/>
<comment type="function">
    <text evidence="1 2">Plays an important role in the maintenance of the Golgi complex, in membrane trafficking, in exocytosis, through its interaction with myosin VI and Rab8. Links myosin VI to the Golgi complex and plays an important role in Golgi ribbon formation. Negatively regulates the induction of IFNB in response to RNA virus infection. Plays a neuroprotective role in the eye and optic nerve. Probably part of the TNF-alpha signaling pathway that can shift the equilibrium toward induction of cell death. May act by regulating membrane trafficking and cellular morphogenesis via a complex that contains Rab8 and huntingtin (HD). Mediates the interaction of Rab8 with the probable GTPase-activating protein TBC1D17 during Rab8-mediated endocytic trafficking, such as that of transferrin receptor (TFRC/TfR); regulates Rab8 recruitment to tubules emanating from the endocytic recycling compartment. Autophagy receptor that interacts directly with both the cargo to become degraded and an autophagy modifier of the MAP1 LC3 family; targets ubiquitin-coated bacteria (xenophagy) and appears to function in the same pathway as SQSTM1 and CALCOCO2/NDP52.</text>
</comment>
<comment type="subunit">
    <text evidence="2">Self-associates. Interacts with HD. Interacts with GTF3A. Interacts with MYO6. Interacts (via UBAN) with ubiquitinated TFRC. Interacts with GTP-bound Rab8 (RAB8A and/or RAB8B). Interacts with TBC1D17. Interacts with TBK1. Interacts with TRAF3. Binds to linear ubiquitin chains. Interacts with LC3 family members MAP1LC3A, MAP1LC3B, GABARAP, GABARAPL1 and GABARAPL2; OPTN phosphorylation increases the association (at least with MAP1LC3B). Interacts with RAB12; the interaction may be indirect. Interacts with TBK1; this interaction leads to the Golgi localization of TBK1 and its subsequent activation. Interacts with palmitoyltransferase ZDHHC17/HIP14; the interaction does not lead to palmitoylation of OPTN. Interacts with CYLD. Interacts with TOM1; the interaction is indirect and is mediated by MYO6, which acts as a bridge between TOM1 and OPTN. Interacts with USP12; the interaction is independent of USP12 deubiquitinase activity and may be involved in regulation of autophagic flux.</text>
</comment>
<comment type="subcellular location">
    <subcellularLocation>
        <location evidence="1">Cytoplasm</location>
        <location evidence="1">Perinuclear region</location>
    </subcellularLocation>
    <subcellularLocation>
        <location evidence="2">Golgi apparatus</location>
    </subcellularLocation>
    <subcellularLocation>
        <location evidence="1">Golgi apparatus</location>
        <location evidence="1">trans-Golgi network</location>
    </subcellularLocation>
    <subcellularLocation>
        <location evidence="1">Cytoplasmic vesicle</location>
        <location evidence="1">Autophagosome</location>
    </subcellularLocation>
    <subcellularLocation>
        <location evidence="1">Cytoplasmic vesicle</location>
    </subcellularLocation>
    <subcellularLocation>
        <location evidence="1">Recycling endosome</location>
    </subcellularLocation>
    <text evidence="1 2">Found in the perinuclear region and associates with the Golgi apparatus. Colocalizes with MYO6 and RAB8 at the Golgi complex and in vesicular structures close to the plasma membrane. Localizes to LC3-positive cytoplasmic vesicles upon induction of autophagy.</text>
</comment>
<comment type="domain">
    <text evidence="1">Ubiquitin-binding motif (UBAN) is essential for its inhibitory function, subcellular localization and interaction with TBK1.</text>
</comment>
<comment type="domain">
    <text evidence="1">The LIR (LC3-interacting region) motif mediates the interaction with ATG8 family proteins.</text>
</comment>
<comment type="PTM">
    <text evidence="1">Phosphorylated by TBK1, leading to restrict bacterial proliferation in case of infection.</text>
</comment>
<reference key="1">
    <citation type="submission" date="2004-11" db="EMBL/GenBank/DDBJ databases">
        <authorList>
            <consortium name="The German cDNA consortium"/>
        </authorList>
    </citation>
    <scope>NUCLEOTIDE SEQUENCE [LARGE SCALE MRNA]</scope>
    <source>
        <tissue>Brain cortex</tissue>
    </source>
</reference>
<organism evidence="6">
    <name type="scientific">Pongo abelii</name>
    <name type="common">Sumatran orangutan</name>
    <name type="synonym">Pongo pygmaeus abelii</name>
    <dbReference type="NCBI Taxonomy" id="9601"/>
    <lineage>
        <taxon>Eukaryota</taxon>
        <taxon>Metazoa</taxon>
        <taxon>Chordata</taxon>
        <taxon>Craniata</taxon>
        <taxon>Vertebrata</taxon>
        <taxon>Euteleostomi</taxon>
        <taxon>Mammalia</taxon>
        <taxon>Eutheria</taxon>
        <taxon>Euarchontoglires</taxon>
        <taxon>Primates</taxon>
        <taxon>Haplorrhini</taxon>
        <taxon>Catarrhini</taxon>
        <taxon>Hominidae</taxon>
        <taxon>Pongo</taxon>
    </lineage>
</organism>
<sequence>MSHQPLSCLTEKEDSPTESTGNGPPYLAHPNLDTFTPEELLQQMKELLTENHQLKEAMKLNNQAMKGRFEELSAWTEKQKEERQFFEIQSKEAKERLMALSHENEKLKEELGKLKGKSERSSEDPTDDSRLPRAEAEQEKDQLRTQVVRLQAEKADLLGIVSELQLKLNSSGSSEDSFVEIRMAEGEAEGSVKEIKHSPGPTRTVSTSRALSKYRSRSAEGAKNYLEHEELTVSQLLLCLREGNQKVERLEIALKEAKERVSDFEKKASNRSEIETQTEGSTEKENDEEKGLETVGSEVEALNLQVTSLFKELQEAHTKLSEAELMKKRLQEKSKLTVLQMTHNKLLREHNNALKTIEELTRKESEKVDRAVLKELSEKLELAEQALASKQLQMDEMKQTIAKQEEDLETMTVLRAQMEVYCSDFHAERAAREKIHEQKEQLALQLAVLLKENDAFEDGGRQSLMEMQSRHGARTSGADQQAYLVQRGAEDRDWRQQRNIPIHSCPKCGEVLPDIDTLQIHVMDCII</sequence>
<feature type="chain" id="PRO_0000058071" description="Optineurin">
    <location>
        <begin position="1"/>
        <end position="527"/>
    </location>
</feature>
<feature type="zinc finger region" description="CCHC NOA-type" evidence="4">
    <location>
        <begin position="497"/>
        <end position="527"/>
    </location>
</feature>
<feature type="region of interest" description="Disordered" evidence="5">
    <location>
        <begin position="1"/>
        <end position="32"/>
    </location>
</feature>
<feature type="region of interest" description="Interaction with Rab8" evidence="1">
    <location>
        <begin position="58"/>
        <end position="209"/>
    </location>
</feature>
<feature type="region of interest" description="Disordered" evidence="5">
    <location>
        <begin position="101"/>
        <end position="143"/>
    </location>
</feature>
<feature type="region of interest" description="Disordered" evidence="5">
    <location>
        <begin position="186"/>
        <end position="214"/>
    </location>
</feature>
<feature type="region of interest" description="Disordered" evidence="5">
    <location>
        <begin position="262"/>
        <end position="292"/>
    </location>
</feature>
<feature type="region of interest" description="Interaction with HD" evidence="1">
    <location>
        <begin position="361"/>
        <end position="527"/>
    </location>
</feature>
<feature type="region of interest" description="Interaction with MYO6" evidence="2">
    <location>
        <begin position="362"/>
        <end position="470"/>
    </location>
</feature>
<feature type="coiled-coil region" evidence="3">
    <location>
        <begin position="38"/>
        <end position="170"/>
    </location>
</feature>
<feature type="coiled-coil region" evidence="3">
    <location>
        <begin position="239"/>
        <end position="458"/>
    </location>
</feature>
<feature type="short sequence motif" description="LIR">
    <location>
        <begin position="176"/>
        <end position="181"/>
    </location>
</feature>
<feature type="short sequence motif" description="UBAN">
    <location>
        <begin position="424"/>
        <end position="429"/>
    </location>
</feature>
<feature type="compositionally biased region" description="Basic and acidic residues" evidence="5">
    <location>
        <begin position="186"/>
        <end position="197"/>
    </location>
</feature>
<feature type="compositionally biased region" description="Polar residues" evidence="5">
    <location>
        <begin position="201"/>
        <end position="210"/>
    </location>
</feature>
<feature type="compositionally biased region" description="Basic and acidic residues" evidence="5">
    <location>
        <begin position="262"/>
        <end position="274"/>
    </location>
</feature>
<feature type="compositionally biased region" description="Basic and acidic residues" evidence="5">
    <location>
        <begin position="281"/>
        <end position="292"/>
    </location>
</feature>
<feature type="binding site" evidence="4">
    <location>
        <position position="505"/>
    </location>
    <ligand>
        <name>Zn(2+)</name>
        <dbReference type="ChEBI" id="CHEBI:29105"/>
    </ligand>
</feature>
<feature type="binding site" evidence="4">
    <location>
        <position position="508"/>
    </location>
    <ligand>
        <name>Zn(2+)</name>
        <dbReference type="ChEBI" id="CHEBI:29105"/>
    </ligand>
</feature>
<feature type="binding site" evidence="4">
    <location>
        <position position="521"/>
    </location>
    <ligand>
        <name>Zn(2+)</name>
        <dbReference type="ChEBI" id="CHEBI:29105"/>
    </ligand>
</feature>
<feature type="binding site" evidence="4">
    <location>
        <position position="525"/>
    </location>
    <ligand>
        <name>Zn(2+)</name>
        <dbReference type="ChEBI" id="CHEBI:29105"/>
    </ligand>
</feature>
<feature type="modified residue" description="Phosphoserine; by TBK1" evidence="2">
    <location>
        <position position="177"/>
    </location>
</feature>
<feature type="modified residue" description="Phosphoserine" evidence="2">
    <location>
        <position position="198"/>
    </location>
</feature>
<feature type="modified residue" description="Phosphoserine" evidence="2">
    <location>
        <position position="476"/>
    </location>
</feature>
<keyword id="KW-0072">Autophagy</keyword>
<keyword id="KW-0175">Coiled coil</keyword>
<keyword id="KW-0963">Cytoplasm</keyword>
<keyword id="KW-0968">Cytoplasmic vesicle</keyword>
<keyword id="KW-0967">Endosome</keyword>
<keyword id="KW-0333">Golgi apparatus</keyword>
<keyword id="KW-0479">Metal-binding</keyword>
<keyword id="KW-0597">Phosphoprotein</keyword>
<keyword id="KW-1185">Reference proteome</keyword>
<keyword id="KW-0862">Zinc</keyword>
<keyword id="KW-0863">Zinc-finger</keyword>
<gene>
    <name type="primary">OPTN</name>
</gene>
<dbReference type="EMBL" id="CR859573">
    <property type="protein sequence ID" value="CAH91737.1"/>
    <property type="molecule type" value="mRNA"/>
</dbReference>
<dbReference type="RefSeq" id="NP_001126008.1">
    <property type="nucleotide sequence ID" value="NM_001132536.1"/>
</dbReference>
<dbReference type="SMR" id="Q5R923"/>
<dbReference type="STRING" id="9601.ENSPPYP00000002431"/>
<dbReference type="GeneID" id="100172952"/>
<dbReference type="KEGG" id="pon:100172952"/>
<dbReference type="CTD" id="10133"/>
<dbReference type="InParanoid" id="Q5R923"/>
<dbReference type="OrthoDB" id="6343844at2759"/>
<dbReference type="Proteomes" id="UP000001595">
    <property type="component" value="Unplaced"/>
</dbReference>
<dbReference type="GO" id="GO:0005776">
    <property type="term" value="C:autophagosome"/>
    <property type="evidence" value="ECO:0007669"/>
    <property type="project" value="UniProtKB-SubCell"/>
</dbReference>
<dbReference type="GO" id="GO:0005794">
    <property type="term" value="C:Golgi apparatus"/>
    <property type="evidence" value="ECO:0000250"/>
    <property type="project" value="UniProtKB"/>
</dbReference>
<dbReference type="GO" id="GO:0005634">
    <property type="term" value="C:nucleus"/>
    <property type="evidence" value="ECO:0007669"/>
    <property type="project" value="TreeGrafter"/>
</dbReference>
<dbReference type="GO" id="GO:0048471">
    <property type="term" value="C:perinuclear region of cytoplasm"/>
    <property type="evidence" value="ECO:0007669"/>
    <property type="project" value="UniProtKB-SubCell"/>
</dbReference>
<dbReference type="GO" id="GO:0055037">
    <property type="term" value="C:recycling endosome"/>
    <property type="evidence" value="ECO:0007669"/>
    <property type="project" value="UniProtKB-SubCell"/>
</dbReference>
<dbReference type="GO" id="GO:0005802">
    <property type="term" value="C:trans-Golgi network"/>
    <property type="evidence" value="ECO:0000250"/>
    <property type="project" value="UniProtKB"/>
</dbReference>
<dbReference type="GO" id="GO:0070530">
    <property type="term" value="F:K63-linked polyubiquitin modification-dependent protein binding"/>
    <property type="evidence" value="ECO:0007669"/>
    <property type="project" value="InterPro"/>
</dbReference>
<dbReference type="GO" id="GO:0008270">
    <property type="term" value="F:zinc ion binding"/>
    <property type="evidence" value="ECO:0007669"/>
    <property type="project" value="UniProtKB-KW"/>
</dbReference>
<dbReference type="GO" id="GO:0006914">
    <property type="term" value="P:autophagy"/>
    <property type="evidence" value="ECO:0007669"/>
    <property type="project" value="UniProtKB-KW"/>
</dbReference>
<dbReference type="GO" id="GO:0034620">
    <property type="term" value="P:cellular response to unfolded protein"/>
    <property type="evidence" value="ECO:0000250"/>
    <property type="project" value="UniProtKB"/>
</dbReference>
<dbReference type="GO" id="GO:0090161">
    <property type="term" value="P:Golgi ribbon formation"/>
    <property type="evidence" value="ECO:0000250"/>
    <property type="project" value="UniProtKB"/>
</dbReference>
<dbReference type="GO" id="GO:0034067">
    <property type="term" value="P:protein localization to Golgi apparatus"/>
    <property type="evidence" value="ECO:0007669"/>
    <property type="project" value="TreeGrafter"/>
</dbReference>
<dbReference type="GO" id="GO:0043122">
    <property type="term" value="P:regulation of canonical NF-kappaB signal transduction"/>
    <property type="evidence" value="ECO:0007669"/>
    <property type="project" value="TreeGrafter"/>
</dbReference>
<dbReference type="CDD" id="cd09803">
    <property type="entry name" value="UBAN"/>
    <property type="match status" value="1"/>
</dbReference>
<dbReference type="FunFam" id="1.20.5.390:FF:000004">
    <property type="entry name" value="Optineurin"/>
    <property type="match status" value="1"/>
</dbReference>
<dbReference type="FunFam" id="1.20.5.990:FF:000002">
    <property type="entry name" value="Optineurin"/>
    <property type="match status" value="1"/>
</dbReference>
<dbReference type="Gene3D" id="1.20.5.390">
    <property type="entry name" value="L1 transposable element, trimerization domain"/>
    <property type="match status" value="1"/>
</dbReference>
<dbReference type="Gene3D" id="1.20.5.990">
    <property type="entry name" value="Nemo cc2-lz domain - 1d5 darpin complex"/>
    <property type="match status" value="1"/>
</dbReference>
<dbReference type="InterPro" id="IPR032419">
    <property type="entry name" value="CC2-LZ_dom"/>
</dbReference>
<dbReference type="InterPro" id="IPR021063">
    <property type="entry name" value="NEMO_N"/>
</dbReference>
<dbReference type="InterPro" id="IPR034735">
    <property type="entry name" value="NEMO_ZF"/>
</dbReference>
<dbReference type="InterPro" id="IPR051301">
    <property type="entry name" value="Optineurin/NFkB_EssMod"/>
</dbReference>
<dbReference type="PANTHER" id="PTHR31553">
    <property type="entry name" value="NF-KAPPA-B ESSENTIAL MODULATOR"/>
    <property type="match status" value="1"/>
</dbReference>
<dbReference type="PANTHER" id="PTHR31553:SF2">
    <property type="entry name" value="OPTINEURIN"/>
    <property type="match status" value="1"/>
</dbReference>
<dbReference type="Pfam" id="PF16516">
    <property type="entry name" value="CC2-LZ"/>
    <property type="match status" value="1"/>
</dbReference>
<dbReference type="Pfam" id="PF11577">
    <property type="entry name" value="NEMO"/>
    <property type="match status" value="1"/>
</dbReference>
<dbReference type="Pfam" id="PF18414">
    <property type="entry name" value="zf_C2H2_10"/>
    <property type="match status" value="1"/>
</dbReference>
<dbReference type="PROSITE" id="PS51801">
    <property type="entry name" value="ZF_CCHC_NOA"/>
    <property type="match status" value="1"/>
</dbReference>
<evidence type="ECO:0000250" key="1"/>
<evidence type="ECO:0000250" key="2">
    <source>
        <dbReference type="UniProtKB" id="Q96CV9"/>
    </source>
</evidence>
<evidence type="ECO:0000255" key="3"/>
<evidence type="ECO:0000255" key="4">
    <source>
        <dbReference type="PROSITE-ProRule" id="PRU01142"/>
    </source>
</evidence>
<evidence type="ECO:0000256" key="5">
    <source>
        <dbReference type="SAM" id="MobiDB-lite"/>
    </source>
</evidence>
<evidence type="ECO:0000312" key="6">
    <source>
        <dbReference type="Proteomes" id="UP000001595"/>
    </source>
</evidence>
<protein>
    <recommendedName>
        <fullName>Optineurin</fullName>
    </recommendedName>
</protein>
<accession>Q5R923</accession>
<name>OPTN_PONAB</name>